<gene>
    <name evidence="11" type="primary">PRL-1</name>
    <name evidence="11" type="synonym">BG:DS07473.3</name>
    <name evidence="11" type="synonym">PRL</name>
    <name evidence="11" type="ORF">CG4993</name>
</gene>
<proteinExistence type="evidence at protein level"/>
<comment type="function">
    <text evidence="3 4 5 8">Probable phosphatase (Probable). Inhibits growth possibly by negatively regulating Src64B-induced growth (PubMed:23577193). Regulates central nervous system circuit formation and stabilization of synapse-dense terminal arbors (PubMed:31048465). In dorsocentral neurons, regulates synaptogenesis in terminal arbors via modulation of the insulin receptor pathway, likely upstream of Akt1, and via reduction of PtdIns(4,5)P2 (Phosphatidylinositol 4,5-bisphosphate) levels (PubMed:31048465). In the nervous system, plays a protective role together with uex in response to olfactory carbon dioxide stimulation (PubMed:31404830).</text>
</comment>
<comment type="catalytic activity">
    <reaction evidence="1">
        <text>O-phospho-L-tyrosyl-[protein] + H2O = L-tyrosyl-[protein] + phosphate</text>
        <dbReference type="Rhea" id="RHEA:10684"/>
        <dbReference type="Rhea" id="RHEA-COMP:10136"/>
        <dbReference type="Rhea" id="RHEA-COMP:20101"/>
        <dbReference type="ChEBI" id="CHEBI:15377"/>
        <dbReference type="ChEBI" id="CHEBI:43474"/>
        <dbReference type="ChEBI" id="CHEBI:46858"/>
        <dbReference type="ChEBI" id="CHEBI:61978"/>
        <dbReference type="EC" id="3.1.3.48"/>
    </reaction>
</comment>
<comment type="subunit">
    <text evidence="1 5">Homotrimer (By similarity). Interacts with uex, possibly at the plasma membrane (PubMed:31404830).</text>
</comment>
<comment type="interaction">
    <interactant intactId="EBI-148091">
        <id>O61722</id>
    </interactant>
    <interactant intactId="EBI-44452356">
        <id>A0A0B7P9G0</id>
        <label>uex</label>
    </interactant>
    <organismsDiffer>false</organismsDiffer>
    <experiments>4</experiments>
</comment>
<comment type="subcellular location">
    <subcellularLocation>
        <location evidence="3">Cytoplasm</location>
    </subcellularLocation>
    <subcellularLocation>
        <location evidence="3 5">Cell membrane</location>
        <topology evidence="1">Lipid-anchor</topology>
    </subcellularLocation>
    <subcellularLocation>
        <location evidence="3">Apicolateral cell membrane</location>
    </subcellularLocation>
    <subcellularLocation>
        <location evidence="4">Cell projection</location>
        <location evidence="4">Axon</location>
    </subcellularLocation>
    <text evidence="3 4">During embryogenesis localizes to cytoplasmic compartments from 1 to 14 hours after egg laying, thereafter becomes associated with the plasma membrane (PubMed:23577193). Localizes to contralateral axon collaterals of dorsocentral neurons (PubMed:31048465).</text>
</comment>
<comment type="tissue specificity">
    <text evidence="4 5">Expressed in the adult head (at protein level) (PubMed:31404830). Expressed in neurons in the antennal lobe and V-glomeruli (at protein level) (PubMed:31404830). Expressed in dorsocentral neurons (at protein level) (PubMed:31048465).</text>
</comment>
<comment type="developmental stage">
    <text evidence="3">Expressed ubiquitously during embryogenesis and larval development (at protein level) (PubMed:23577193). Expressed in wing disks and developing eyes in both actively dividing cells (anterior to the morphogenetic furrow) and differentiated cells (posterior to the morphogenetic furrow) (at protein level) (PubMed:23577193).</text>
</comment>
<comment type="disruption phenotype">
    <text evidence="4 5">Viable (PubMed:31048465, PubMed:31404830). Results in delayed hatching, locomotor defects and inability to fly (PubMed:31048465). Results in defects in axonal target areas in several central nervous system circuits (PubMed:31048465). Results in axonal and synapses defects in two distinct brain neuropils in the antennal lobes and mushroom bodies, respectively related to olfaction and olfaction-associated learning (PubMed:31048465). Reduces size of the central nervous system neuropil (a region of densely packed axons, dendrites, and synapses) (PubMed:31048465). When exposed to high concentration of carbon dioxide treatment results in a vertical held-up wing phenotype with calcium hyperactivation of neurons in the antennal lobe (PubMed:31048465, PubMed:31404830). Results in loss of synaptic arborizations from the contralateral mechanosensory neuron axon collateral with no defect in morphology (PubMed:31048465). RNAi-mediated knockdown in mechanosensory neurons eliminates terminal arbors and reduces numbers of synapses in the contralateral projecting axon collateral (PubMed:31048465).</text>
</comment>
<comment type="miscellaneous">
    <text evidence="4">Compartment-specific localization and function depends on long untranslated sequences (UTR) in the PRL-1 mRNA.</text>
</comment>
<comment type="similarity">
    <text evidence="7">Belongs to the protein-tyrosine phosphatase family.</text>
</comment>
<comment type="sequence caution" evidence="7">
    <conflict type="erroneous initiation">
        <sequence resource="EMBL-CDS" id="AAL26988"/>
    </conflict>
    <text>Truncated N-terminus.</text>
</comment>
<reference evidence="9" key="1">
    <citation type="submission" date="2001-06" db="EMBL/GenBank/DDBJ databases">
        <title>PTPCAAX protein tyrosine phosphatases: differential expression in tumor cell lines and characterization of their enzymatic activity.</title>
        <authorList>
            <person name="Wang J."/>
            <person name="Kirby C.E."/>
            <person name="Pettiford S.M."/>
            <person name="Herbst R."/>
        </authorList>
    </citation>
    <scope>NUCLEOTIDE SEQUENCE [MRNA]</scope>
</reference>
<reference evidence="12" key="2">
    <citation type="journal article" date="2000" name="Science">
        <title>The genome sequence of Drosophila melanogaster.</title>
        <authorList>
            <person name="Adams M.D."/>
            <person name="Celniker S.E."/>
            <person name="Holt R.A."/>
            <person name="Evans C.A."/>
            <person name="Gocayne J.D."/>
            <person name="Amanatides P.G."/>
            <person name="Scherer S.E."/>
            <person name="Li P.W."/>
            <person name="Hoskins R.A."/>
            <person name="Galle R.F."/>
            <person name="George R.A."/>
            <person name="Lewis S.E."/>
            <person name="Richards S."/>
            <person name="Ashburner M."/>
            <person name="Henderson S.N."/>
            <person name="Sutton G.G."/>
            <person name="Wortman J.R."/>
            <person name="Yandell M.D."/>
            <person name="Zhang Q."/>
            <person name="Chen L.X."/>
            <person name="Brandon R.C."/>
            <person name="Rogers Y.-H.C."/>
            <person name="Blazej R.G."/>
            <person name="Champe M."/>
            <person name="Pfeiffer B.D."/>
            <person name="Wan K.H."/>
            <person name="Doyle C."/>
            <person name="Baxter E.G."/>
            <person name="Helt G."/>
            <person name="Nelson C.R."/>
            <person name="Miklos G.L.G."/>
            <person name="Abril J.F."/>
            <person name="Agbayani A."/>
            <person name="An H.-J."/>
            <person name="Andrews-Pfannkoch C."/>
            <person name="Baldwin D."/>
            <person name="Ballew R.M."/>
            <person name="Basu A."/>
            <person name="Baxendale J."/>
            <person name="Bayraktaroglu L."/>
            <person name="Beasley E.M."/>
            <person name="Beeson K.Y."/>
            <person name="Benos P.V."/>
            <person name="Berman B.P."/>
            <person name="Bhandari D."/>
            <person name="Bolshakov S."/>
            <person name="Borkova D."/>
            <person name="Botchan M.R."/>
            <person name="Bouck J."/>
            <person name="Brokstein P."/>
            <person name="Brottier P."/>
            <person name="Burtis K.C."/>
            <person name="Busam D.A."/>
            <person name="Butler H."/>
            <person name="Cadieu E."/>
            <person name="Center A."/>
            <person name="Chandra I."/>
            <person name="Cherry J.M."/>
            <person name="Cawley S."/>
            <person name="Dahlke C."/>
            <person name="Davenport L.B."/>
            <person name="Davies P."/>
            <person name="de Pablos B."/>
            <person name="Delcher A."/>
            <person name="Deng Z."/>
            <person name="Mays A.D."/>
            <person name="Dew I."/>
            <person name="Dietz S.M."/>
            <person name="Dodson K."/>
            <person name="Doup L.E."/>
            <person name="Downes M."/>
            <person name="Dugan-Rocha S."/>
            <person name="Dunkov B.C."/>
            <person name="Dunn P."/>
            <person name="Durbin K.J."/>
            <person name="Evangelista C.C."/>
            <person name="Ferraz C."/>
            <person name="Ferriera S."/>
            <person name="Fleischmann W."/>
            <person name="Fosler C."/>
            <person name="Gabrielian A.E."/>
            <person name="Garg N.S."/>
            <person name="Gelbart W.M."/>
            <person name="Glasser K."/>
            <person name="Glodek A."/>
            <person name="Gong F."/>
            <person name="Gorrell J.H."/>
            <person name="Gu Z."/>
            <person name="Guan P."/>
            <person name="Harris M."/>
            <person name="Harris N.L."/>
            <person name="Harvey D.A."/>
            <person name="Heiman T.J."/>
            <person name="Hernandez J.R."/>
            <person name="Houck J."/>
            <person name="Hostin D."/>
            <person name="Houston K.A."/>
            <person name="Howland T.J."/>
            <person name="Wei M.-H."/>
            <person name="Ibegwam C."/>
            <person name="Jalali M."/>
            <person name="Kalush F."/>
            <person name="Karpen G.H."/>
            <person name="Ke Z."/>
            <person name="Kennison J.A."/>
            <person name="Ketchum K.A."/>
            <person name="Kimmel B.E."/>
            <person name="Kodira C.D."/>
            <person name="Kraft C.L."/>
            <person name="Kravitz S."/>
            <person name="Kulp D."/>
            <person name="Lai Z."/>
            <person name="Lasko P."/>
            <person name="Lei Y."/>
            <person name="Levitsky A.A."/>
            <person name="Li J.H."/>
            <person name="Li Z."/>
            <person name="Liang Y."/>
            <person name="Lin X."/>
            <person name="Liu X."/>
            <person name="Mattei B."/>
            <person name="McIntosh T.C."/>
            <person name="McLeod M.P."/>
            <person name="McPherson D."/>
            <person name="Merkulov G."/>
            <person name="Milshina N.V."/>
            <person name="Mobarry C."/>
            <person name="Morris J."/>
            <person name="Moshrefi A."/>
            <person name="Mount S.M."/>
            <person name="Moy M."/>
            <person name="Murphy B."/>
            <person name="Murphy L."/>
            <person name="Muzny D.M."/>
            <person name="Nelson D.L."/>
            <person name="Nelson D.R."/>
            <person name="Nelson K.A."/>
            <person name="Nixon K."/>
            <person name="Nusskern D.R."/>
            <person name="Pacleb J.M."/>
            <person name="Palazzolo M."/>
            <person name="Pittman G.S."/>
            <person name="Pan S."/>
            <person name="Pollard J."/>
            <person name="Puri V."/>
            <person name="Reese M.G."/>
            <person name="Reinert K."/>
            <person name="Remington K."/>
            <person name="Saunders R.D.C."/>
            <person name="Scheeler F."/>
            <person name="Shen H."/>
            <person name="Shue B.C."/>
            <person name="Siden-Kiamos I."/>
            <person name="Simpson M."/>
            <person name="Skupski M.P."/>
            <person name="Smith T.J."/>
            <person name="Spier E."/>
            <person name="Spradling A.C."/>
            <person name="Stapleton M."/>
            <person name="Strong R."/>
            <person name="Sun E."/>
            <person name="Svirskas R."/>
            <person name="Tector C."/>
            <person name="Turner R."/>
            <person name="Venter E."/>
            <person name="Wang A.H."/>
            <person name="Wang X."/>
            <person name="Wang Z.-Y."/>
            <person name="Wassarman D.A."/>
            <person name="Weinstock G.M."/>
            <person name="Weissenbach J."/>
            <person name="Williams S.M."/>
            <person name="Woodage T."/>
            <person name="Worley K.C."/>
            <person name="Wu D."/>
            <person name="Yang S."/>
            <person name="Yao Q.A."/>
            <person name="Ye J."/>
            <person name="Yeh R.-F."/>
            <person name="Zaveri J.S."/>
            <person name="Zhan M."/>
            <person name="Zhang G."/>
            <person name="Zhao Q."/>
            <person name="Zheng L."/>
            <person name="Zheng X.H."/>
            <person name="Zhong F.N."/>
            <person name="Zhong W."/>
            <person name="Zhou X."/>
            <person name="Zhu S.C."/>
            <person name="Zhu X."/>
            <person name="Smith H.O."/>
            <person name="Gibbs R.A."/>
            <person name="Myers E.W."/>
            <person name="Rubin G.M."/>
            <person name="Venter J.C."/>
        </authorList>
    </citation>
    <scope>NUCLEOTIDE SEQUENCE [LARGE SCALE GENOMIC DNA]</scope>
    <source>
        <strain evidence="12">Berkeley</strain>
    </source>
</reference>
<reference evidence="12" key="3">
    <citation type="journal article" date="2002" name="Genome Biol.">
        <title>Annotation of the Drosophila melanogaster euchromatic genome: a systematic review.</title>
        <authorList>
            <person name="Misra S."/>
            <person name="Crosby M.A."/>
            <person name="Mungall C.J."/>
            <person name="Matthews B.B."/>
            <person name="Campbell K.S."/>
            <person name="Hradecky P."/>
            <person name="Huang Y."/>
            <person name="Kaminker J.S."/>
            <person name="Millburn G.H."/>
            <person name="Prochnik S.E."/>
            <person name="Smith C.D."/>
            <person name="Tupy J.L."/>
            <person name="Whitfield E.J."/>
            <person name="Bayraktaroglu L."/>
            <person name="Berman B.P."/>
            <person name="Bettencourt B.R."/>
            <person name="Celniker S.E."/>
            <person name="de Grey A.D.N.J."/>
            <person name="Drysdale R.A."/>
            <person name="Harris N.L."/>
            <person name="Richter J."/>
            <person name="Russo S."/>
            <person name="Schroeder A.J."/>
            <person name="Shu S.Q."/>
            <person name="Stapleton M."/>
            <person name="Yamada C."/>
            <person name="Ashburner M."/>
            <person name="Gelbart W.M."/>
            <person name="Rubin G.M."/>
            <person name="Lewis S.E."/>
        </authorList>
    </citation>
    <scope>GENOME REANNOTATION</scope>
    <source>
        <strain evidence="12">Berkeley</strain>
    </source>
</reference>
<reference evidence="10" key="4">
    <citation type="journal article" date="2002" name="Genome Biol.">
        <title>A Drosophila full-length cDNA resource.</title>
        <authorList>
            <person name="Stapleton M."/>
            <person name="Carlson J.W."/>
            <person name="Brokstein P."/>
            <person name="Yu C."/>
            <person name="Champe M."/>
            <person name="George R.A."/>
            <person name="Guarin H."/>
            <person name="Kronmiller B."/>
            <person name="Pacleb J.M."/>
            <person name="Park S."/>
            <person name="Wan K.H."/>
            <person name="Rubin G.M."/>
            <person name="Celniker S.E."/>
        </authorList>
    </citation>
    <scope>NUCLEOTIDE SEQUENCE [LARGE SCALE MRNA]</scope>
    <source>
        <strain evidence="10">Berkeley</strain>
        <tissue evidence="10">Embryo</tissue>
    </source>
</reference>
<reference evidence="7" key="5">
    <citation type="journal article" date="2013" name="PLoS ONE">
        <title>Drosophila PRL-1 is a growth inhibitor that counteracts the function of the Src oncogene.</title>
        <authorList>
            <person name="Pagarigan K.T."/>
            <person name="Bunn B.W."/>
            <person name="Goodchild J."/>
            <person name="Rahe T.K."/>
            <person name="Weis J.F."/>
            <person name="Saucedo L.J."/>
        </authorList>
    </citation>
    <scope>FUNCTION</scope>
    <scope>SUBCELLULAR LOCATION</scope>
    <scope>DEVELOPMENTAL STAGE</scope>
    <scope>MUTAGENESIS OF 173-CYS--GLN-176</scope>
</reference>
<reference evidence="7" key="6">
    <citation type="journal article" date="2019" name="IScience">
        <title>A Novel Neuroprotective Role of Phosphatase of Regenerating Liver-1 against CO2 Stimulation in Drosophila.</title>
        <authorList>
            <person name="Guo P."/>
            <person name="Xu X."/>
            <person name="Wang F."/>
            <person name="Yuan X."/>
            <person name="Tu Y."/>
            <person name="Zhang B."/>
            <person name="Zheng H."/>
            <person name="Yu D."/>
            <person name="Ge W."/>
            <person name="Gong Z."/>
            <person name="Yang X."/>
            <person name="Xi Y."/>
        </authorList>
    </citation>
    <scope>FUNCTION</scope>
    <scope>INTERACTION WITH UEX</scope>
    <scope>SUBCELLULAR LOCATION</scope>
    <scope>TISSUE SPECIFICITY</scope>
    <scope>DISRUPTION PHENOTYPE</scope>
</reference>
<reference evidence="7" key="7">
    <citation type="journal article" date="2019" name="Science">
        <title>Branch-restricted localization of phosphatase Prl-1 specifies axonal synaptogenesis domains.</title>
        <authorList>
            <person name="Urwyler O."/>
            <person name="Izadifar A."/>
            <person name="Vandenbogaerde S."/>
            <person name="Sachse S."/>
            <person name="Misbaer A."/>
            <person name="Schmucker D."/>
        </authorList>
    </citation>
    <scope>FUNCTION</scope>
    <scope>SUBCELLULAR LOCATION</scope>
    <scope>TISSUE SPECIFICITY</scope>
    <scope>DISRUPTION PHENOTYPE</scope>
    <scope>MUTAGENESIS OF GLY-144</scope>
</reference>
<keyword id="KW-0002">3D-structure</keyword>
<keyword id="KW-1003">Cell membrane</keyword>
<keyword id="KW-0966">Cell projection</keyword>
<keyword id="KW-0963">Cytoplasm</keyword>
<keyword id="KW-0378">Hydrolase</keyword>
<keyword id="KW-0449">Lipoprotein</keyword>
<keyword id="KW-0472">Membrane</keyword>
<keyword id="KW-0488">Methylation</keyword>
<keyword id="KW-0636">Prenylation</keyword>
<keyword id="KW-0904">Protein phosphatase</keyword>
<keyword id="KW-1185">Reference proteome</keyword>
<protein>
    <recommendedName>
        <fullName evidence="11">PRL-1 phosphatase</fullName>
        <ecNumber evidence="1">3.1.3.48</ecNumber>
    </recommendedName>
    <alternativeName>
        <fullName evidence="6">Phosphatase of regenerating liver-1</fullName>
    </alternativeName>
</protein>
<name>PRL1_DROME</name>
<sequence length="176" mass="19973">MSITMRQKDLRPAPALIEYKGMKFLITDRPSDITINHYIMELKKNNVNTVVRVCEPSYNTDELETQGITVKDLAFEDGTFPPQQVVDEWFEVLKDKYQQNPEACVAVHCVAGLGRAPVLVALALIELGLKYEAAVEMIRDKRRGAINAKQLSFLEKYKPKARLKHKNGHKNSCSVQ</sequence>
<accession>O61722</accession>
<accession>Q95VY8</accession>
<organism evidence="12">
    <name type="scientific">Drosophila melanogaster</name>
    <name type="common">Fruit fly</name>
    <dbReference type="NCBI Taxonomy" id="7227"/>
    <lineage>
        <taxon>Eukaryota</taxon>
        <taxon>Metazoa</taxon>
        <taxon>Ecdysozoa</taxon>
        <taxon>Arthropoda</taxon>
        <taxon>Hexapoda</taxon>
        <taxon>Insecta</taxon>
        <taxon>Pterygota</taxon>
        <taxon>Neoptera</taxon>
        <taxon>Endopterygota</taxon>
        <taxon>Diptera</taxon>
        <taxon>Brachycera</taxon>
        <taxon>Muscomorpha</taxon>
        <taxon>Ephydroidea</taxon>
        <taxon>Drosophilidae</taxon>
        <taxon>Drosophila</taxon>
        <taxon>Sophophora</taxon>
    </lineage>
</organism>
<feature type="chain" id="PRO_0000452474" description="PRL-1 phosphatase" evidence="7">
    <location>
        <begin position="1"/>
        <end position="176"/>
    </location>
</feature>
<feature type="propeptide" id="PRO_0000452475" description="Removed in mature form" evidence="1">
    <location>
        <begin position="174"/>
        <end position="176"/>
    </location>
</feature>
<feature type="domain" description="Tyrosine-protein phosphatase" evidence="2">
    <location>
        <begin position="13"/>
        <end position="166"/>
    </location>
</feature>
<feature type="active site" description="Phosphocysteine intermediate" evidence="2">
    <location>
        <position position="109"/>
    </location>
</feature>
<feature type="modified residue" description="Cysteine methyl ester" evidence="1">
    <location>
        <position position="173"/>
    </location>
</feature>
<feature type="lipid moiety-binding region" description="S-farnesyl cysteine" evidence="1">
    <location>
        <position position="173"/>
    </location>
</feature>
<feature type="mutagenesis site" description="Fails to rescue the loss of terminal arborization in mechanosensory neurons in null flies." evidence="4">
    <original>G</original>
    <variation>E</variation>
    <location>
        <position position="144"/>
    </location>
</feature>
<feature type="mutagenesis site" description="Fails to inhibit growth. Loss of localization to apical membranes. Not necessary to modify src-induced overgrowth." evidence="3">
    <location>
        <begin position="173"/>
        <end position="176"/>
    </location>
</feature>
<feature type="strand" evidence="13">
    <location>
        <begin position="16"/>
        <end position="19"/>
    </location>
</feature>
<feature type="strand" evidence="13">
    <location>
        <begin position="22"/>
        <end position="27"/>
    </location>
</feature>
<feature type="helix" evidence="13">
    <location>
        <begin position="35"/>
        <end position="44"/>
    </location>
</feature>
<feature type="strand" evidence="13">
    <location>
        <begin position="47"/>
        <end position="52"/>
    </location>
</feature>
<feature type="helix" evidence="13">
    <location>
        <begin position="61"/>
        <end position="65"/>
    </location>
</feature>
<feature type="strand" evidence="13">
    <location>
        <begin position="69"/>
        <end position="72"/>
    </location>
</feature>
<feature type="helix" evidence="13">
    <location>
        <begin position="83"/>
        <end position="99"/>
    </location>
</feature>
<feature type="strand" evidence="13">
    <location>
        <begin position="104"/>
        <end position="108"/>
    </location>
</feature>
<feature type="strand" evidence="13">
    <location>
        <begin position="110"/>
        <end position="114"/>
    </location>
</feature>
<feature type="helix" evidence="13">
    <location>
        <begin position="115"/>
        <end position="127"/>
    </location>
</feature>
<feature type="helix" evidence="13">
    <location>
        <begin position="131"/>
        <end position="141"/>
    </location>
</feature>
<feature type="helix" evidence="13">
    <location>
        <begin position="148"/>
        <end position="154"/>
    </location>
</feature>
<evidence type="ECO:0000250" key="1">
    <source>
        <dbReference type="UniProtKB" id="Q93096"/>
    </source>
</evidence>
<evidence type="ECO:0000255" key="2">
    <source>
        <dbReference type="PROSITE-ProRule" id="PRU00160"/>
    </source>
</evidence>
<evidence type="ECO:0000269" key="3">
    <source>
    </source>
</evidence>
<evidence type="ECO:0000269" key="4">
    <source>
    </source>
</evidence>
<evidence type="ECO:0000269" key="5">
    <source>
    </source>
</evidence>
<evidence type="ECO:0000303" key="6">
    <source>
    </source>
</evidence>
<evidence type="ECO:0000305" key="7"/>
<evidence type="ECO:0000305" key="8">
    <source>
    </source>
</evidence>
<evidence type="ECO:0000312" key="9">
    <source>
        <dbReference type="EMBL" id="AAL26988.1"/>
    </source>
</evidence>
<evidence type="ECO:0000312" key="10">
    <source>
        <dbReference type="EMBL" id="AAL49127.1"/>
    </source>
</evidence>
<evidence type="ECO:0000312" key="11">
    <source>
        <dbReference type="FlyBase" id="FBgn0024734"/>
    </source>
</evidence>
<evidence type="ECO:0000312" key="12">
    <source>
        <dbReference type="Proteomes" id="UP000000803"/>
    </source>
</evidence>
<evidence type="ECO:0007829" key="13">
    <source>
        <dbReference type="PDB" id="8CT8"/>
    </source>
</evidence>
<dbReference type="EC" id="3.1.3.48" evidence="1"/>
<dbReference type="EMBL" id="AF390535">
    <property type="protein sequence ID" value="AAL26988.1"/>
    <property type="status" value="ALT_INIT"/>
    <property type="molecule type" value="mRNA"/>
</dbReference>
<dbReference type="EMBL" id="AE014134">
    <property type="protein sequence ID" value="AAF53506.2"/>
    <property type="molecule type" value="Genomic_DNA"/>
</dbReference>
<dbReference type="EMBL" id="AE014134">
    <property type="protein sequence ID" value="AAN10934.1"/>
    <property type="molecule type" value="Genomic_DNA"/>
</dbReference>
<dbReference type="EMBL" id="AE014134">
    <property type="protein sequence ID" value="AGB93022.1"/>
    <property type="molecule type" value="Genomic_DNA"/>
</dbReference>
<dbReference type="EMBL" id="AE014134">
    <property type="protein sequence ID" value="AGB93023.1"/>
    <property type="molecule type" value="Genomic_DNA"/>
</dbReference>
<dbReference type="EMBL" id="AY071505">
    <property type="protein sequence ID" value="AAL49127.1"/>
    <property type="molecule type" value="mRNA"/>
</dbReference>
<dbReference type="RefSeq" id="NP_001260487.1">
    <property type="nucleotide sequence ID" value="NM_001273558.1"/>
</dbReference>
<dbReference type="RefSeq" id="NP_001260488.1">
    <property type="nucleotide sequence ID" value="NM_001273559.1"/>
</dbReference>
<dbReference type="RefSeq" id="NP_609780.1">
    <property type="nucleotide sequence ID" value="NM_135936.3"/>
</dbReference>
<dbReference type="RefSeq" id="NP_723956.1">
    <property type="nucleotide sequence ID" value="NM_165150.2"/>
</dbReference>
<dbReference type="PDB" id="8CT8">
    <property type="method" value="X-ray"/>
    <property type="resolution" value="2.50 A"/>
    <property type="chains" value="C/D=14-165"/>
</dbReference>
<dbReference type="PDBsum" id="8CT8"/>
<dbReference type="SMR" id="O61722"/>
<dbReference type="FunCoup" id="O61722">
    <property type="interactions" value="1354"/>
</dbReference>
<dbReference type="IntAct" id="O61722">
    <property type="interactions" value="1"/>
</dbReference>
<dbReference type="STRING" id="7227.FBpp0304634"/>
<dbReference type="PaxDb" id="7227-FBpp0080413"/>
<dbReference type="DNASU" id="34952"/>
<dbReference type="EnsemblMetazoa" id="FBtr0080856">
    <property type="protein sequence ID" value="FBpp0080413"/>
    <property type="gene ID" value="FBgn0024734"/>
</dbReference>
<dbReference type="EnsemblMetazoa" id="FBtr0080857">
    <property type="protein sequence ID" value="FBpp0080414"/>
    <property type="gene ID" value="FBgn0024734"/>
</dbReference>
<dbReference type="EnsemblMetazoa" id="FBtr0332357">
    <property type="protein sequence ID" value="FBpp0304634"/>
    <property type="gene ID" value="FBgn0024734"/>
</dbReference>
<dbReference type="EnsemblMetazoa" id="FBtr0332358">
    <property type="protein sequence ID" value="FBpp0304635"/>
    <property type="gene ID" value="FBgn0024734"/>
</dbReference>
<dbReference type="GeneID" id="34952"/>
<dbReference type="KEGG" id="dme:Dmel_CG4993"/>
<dbReference type="UCSC" id="CG4993-RA">
    <property type="organism name" value="d. melanogaster"/>
</dbReference>
<dbReference type="AGR" id="FB:FBgn0024734"/>
<dbReference type="CTD" id="34952"/>
<dbReference type="FlyBase" id="FBgn0024734">
    <property type="gene designation" value="PRL-1"/>
</dbReference>
<dbReference type="VEuPathDB" id="VectorBase:FBgn0024734"/>
<dbReference type="eggNOG" id="KOG2836">
    <property type="taxonomic scope" value="Eukaryota"/>
</dbReference>
<dbReference type="GeneTree" id="ENSGT00940000154383"/>
<dbReference type="HOGENOM" id="CLU_099263_2_0_1"/>
<dbReference type="InParanoid" id="O61722"/>
<dbReference type="OMA" id="IQVHGWT"/>
<dbReference type="OrthoDB" id="5632at2759"/>
<dbReference type="PhylomeDB" id="O61722"/>
<dbReference type="BioGRID-ORCS" id="34952">
    <property type="hits" value="0 hits in 3 CRISPR screens"/>
</dbReference>
<dbReference type="ChiTaRS" id="PRL-1">
    <property type="organism name" value="fly"/>
</dbReference>
<dbReference type="GenomeRNAi" id="34952"/>
<dbReference type="PRO" id="PR:O61722"/>
<dbReference type="Proteomes" id="UP000000803">
    <property type="component" value="Chromosome 2L"/>
</dbReference>
<dbReference type="Bgee" id="FBgn0024734">
    <property type="expression patterns" value="Expressed in mechanosensory neuron of leg chordotonal organ in insect leg and 260 other cell types or tissues"/>
</dbReference>
<dbReference type="ExpressionAtlas" id="O61722">
    <property type="expression patterns" value="baseline"/>
</dbReference>
<dbReference type="GO" id="GO:0016327">
    <property type="term" value="C:apicolateral plasma membrane"/>
    <property type="evidence" value="ECO:0007669"/>
    <property type="project" value="UniProtKB-SubCell"/>
</dbReference>
<dbReference type="GO" id="GO:0030424">
    <property type="term" value="C:axon"/>
    <property type="evidence" value="ECO:0007669"/>
    <property type="project" value="UniProtKB-SubCell"/>
</dbReference>
<dbReference type="GO" id="GO:0005737">
    <property type="term" value="C:cytoplasm"/>
    <property type="evidence" value="ECO:0000314"/>
    <property type="project" value="FlyBase"/>
</dbReference>
<dbReference type="GO" id="GO:0005634">
    <property type="term" value="C:nucleus"/>
    <property type="evidence" value="ECO:0000318"/>
    <property type="project" value="GO_Central"/>
</dbReference>
<dbReference type="GO" id="GO:0005886">
    <property type="term" value="C:plasma membrane"/>
    <property type="evidence" value="ECO:0000314"/>
    <property type="project" value="UniProtKB"/>
</dbReference>
<dbReference type="GO" id="GO:0004725">
    <property type="term" value="F:protein tyrosine phosphatase activity"/>
    <property type="evidence" value="ECO:0000250"/>
    <property type="project" value="FlyBase"/>
</dbReference>
<dbReference type="GO" id="GO:0008138">
    <property type="term" value="F:protein tyrosine/serine/threonine phosphatase activity"/>
    <property type="evidence" value="ECO:0000303"/>
    <property type="project" value="FlyBase"/>
</dbReference>
<dbReference type="GO" id="GO:0071244">
    <property type="term" value="P:cellular response to carbon dioxide"/>
    <property type="evidence" value="ECO:0000316"/>
    <property type="project" value="UniProtKB"/>
</dbReference>
<dbReference type="GO" id="GO:0030514">
    <property type="term" value="P:negative regulation of BMP signaling pathway"/>
    <property type="evidence" value="ECO:0000316"/>
    <property type="project" value="FlyBase"/>
</dbReference>
<dbReference type="CDD" id="cd14500">
    <property type="entry name" value="PTP-IVa"/>
    <property type="match status" value="1"/>
</dbReference>
<dbReference type="FunFam" id="3.90.190.10:FF:000081">
    <property type="entry name" value="Tyrosine phosphatase type IVA"/>
    <property type="match status" value="1"/>
</dbReference>
<dbReference type="Gene3D" id="3.90.190.10">
    <property type="entry name" value="Protein tyrosine phosphatase superfamily"/>
    <property type="match status" value="1"/>
</dbReference>
<dbReference type="InterPro" id="IPR029021">
    <property type="entry name" value="Prot-tyrosine_phosphatase-like"/>
</dbReference>
<dbReference type="InterPro" id="IPR050561">
    <property type="entry name" value="PTP"/>
</dbReference>
<dbReference type="InterPro" id="IPR000387">
    <property type="entry name" value="Tyr_Pase_dom"/>
</dbReference>
<dbReference type="InterPro" id="IPR020422">
    <property type="entry name" value="TYR_PHOSPHATASE_DUAL_dom"/>
</dbReference>
<dbReference type="PANTHER" id="PTHR23339">
    <property type="entry name" value="TYROSINE SPECIFIC PROTEIN PHOSPHATASE AND DUAL SPECIFICITY PROTEIN PHOSPHATASE"/>
    <property type="match status" value="1"/>
</dbReference>
<dbReference type="Pfam" id="PF22785">
    <property type="entry name" value="Tc-R-P"/>
    <property type="match status" value="1"/>
</dbReference>
<dbReference type="SUPFAM" id="SSF52799">
    <property type="entry name" value="(Phosphotyrosine protein) phosphatases II"/>
    <property type="match status" value="1"/>
</dbReference>
<dbReference type="PROSITE" id="PS50056">
    <property type="entry name" value="TYR_PHOSPHATASE_2"/>
    <property type="match status" value="1"/>
</dbReference>
<dbReference type="PROSITE" id="PS50054">
    <property type="entry name" value="TYR_PHOSPHATASE_DUAL"/>
    <property type="match status" value="1"/>
</dbReference>